<dbReference type="EMBL" id="CP000580">
    <property type="protein sequence ID" value="ABN99331.1"/>
    <property type="molecule type" value="Genomic_DNA"/>
</dbReference>
<dbReference type="SMR" id="A3Q2F4"/>
<dbReference type="KEGG" id="mjl:Mjls_3554"/>
<dbReference type="HOGENOM" id="CLU_095424_4_0_11"/>
<dbReference type="BioCyc" id="MSP164757:G1G8C-3584-MONOMER"/>
<dbReference type="GO" id="GO:0022625">
    <property type="term" value="C:cytosolic large ribosomal subunit"/>
    <property type="evidence" value="ECO:0007669"/>
    <property type="project" value="TreeGrafter"/>
</dbReference>
<dbReference type="GO" id="GO:0003735">
    <property type="term" value="F:structural constituent of ribosome"/>
    <property type="evidence" value="ECO:0007669"/>
    <property type="project" value="InterPro"/>
</dbReference>
<dbReference type="GO" id="GO:0006412">
    <property type="term" value="P:translation"/>
    <property type="evidence" value="ECO:0007669"/>
    <property type="project" value="UniProtKB-UniRule"/>
</dbReference>
<dbReference type="FunFam" id="2.40.50.100:FF:000020">
    <property type="entry name" value="50S ribosomal protein L27"/>
    <property type="match status" value="1"/>
</dbReference>
<dbReference type="Gene3D" id="2.40.50.100">
    <property type="match status" value="1"/>
</dbReference>
<dbReference type="HAMAP" id="MF_00539">
    <property type="entry name" value="Ribosomal_bL27"/>
    <property type="match status" value="1"/>
</dbReference>
<dbReference type="InterPro" id="IPR001684">
    <property type="entry name" value="Ribosomal_bL27"/>
</dbReference>
<dbReference type="InterPro" id="IPR018261">
    <property type="entry name" value="Ribosomal_bL27_CS"/>
</dbReference>
<dbReference type="NCBIfam" id="TIGR00062">
    <property type="entry name" value="L27"/>
    <property type="match status" value="1"/>
</dbReference>
<dbReference type="PANTHER" id="PTHR15893:SF0">
    <property type="entry name" value="LARGE RIBOSOMAL SUBUNIT PROTEIN BL27M"/>
    <property type="match status" value="1"/>
</dbReference>
<dbReference type="PANTHER" id="PTHR15893">
    <property type="entry name" value="RIBOSOMAL PROTEIN L27"/>
    <property type="match status" value="1"/>
</dbReference>
<dbReference type="Pfam" id="PF01016">
    <property type="entry name" value="Ribosomal_L27"/>
    <property type="match status" value="1"/>
</dbReference>
<dbReference type="PRINTS" id="PR00063">
    <property type="entry name" value="RIBOSOMALL27"/>
</dbReference>
<dbReference type="SUPFAM" id="SSF110324">
    <property type="entry name" value="Ribosomal L27 protein-like"/>
    <property type="match status" value="1"/>
</dbReference>
<dbReference type="PROSITE" id="PS00831">
    <property type="entry name" value="RIBOSOMAL_L27"/>
    <property type="match status" value="1"/>
</dbReference>
<name>RL27_MYCSJ</name>
<accession>A3Q2F4</accession>
<sequence>MAHKKGASSSRNGRDSAAQRLGVKRFGGQVVKAGEIIVRQRGTHFHPGVNVGRGGDDTLFATAPGSVEFGSRRGRKTVNIVPVARPEA</sequence>
<protein>
    <recommendedName>
        <fullName evidence="1">Large ribosomal subunit protein bL27</fullName>
    </recommendedName>
    <alternativeName>
        <fullName evidence="3">50S ribosomal protein L27</fullName>
    </alternativeName>
</protein>
<comment type="similarity">
    <text evidence="1">Belongs to the bacterial ribosomal protein bL27 family.</text>
</comment>
<gene>
    <name evidence="1" type="primary">rpmA</name>
    <name type="ordered locus">Mjls_3554</name>
</gene>
<keyword id="KW-0687">Ribonucleoprotein</keyword>
<keyword id="KW-0689">Ribosomal protein</keyword>
<organism>
    <name type="scientific">Mycobacterium sp. (strain JLS)</name>
    <dbReference type="NCBI Taxonomy" id="164757"/>
    <lineage>
        <taxon>Bacteria</taxon>
        <taxon>Bacillati</taxon>
        <taxon>Actinomycetota</taxon>
        <taxon>Actinomycetes</taxon>
        <taxon>Mycobacteriales</taxon>
        <taxon>Mycobacteriaceae</taxon>
        <taxon>Mycobacterium</taxon>
    </lineage>
</organism>
<proteinExistence type="inferred from homology"/>
<reference key="1">
    <citation type="submission" date="2007-02" db="EMBL/GenBank/DDBJ databases">
        <title>Complete sequence of Mycobacterium sp. JLS.</title>
        <authorList>
            <consortium name="US DOE Joint Genome Institute"/>
            <person name="Copeland A."/>
            <person name="Lucas S."/>
            <person name="Lapidus A."/>
            <person name="Barry K."/>
            <person name="Detter J.C."/>
            <person name="Glavina del Rio T."/>
            <person name="Hammon N."/>
            <person name="Israni S."/>
            <person name="Dalin E."/>
            <person name="Tice H."/>
            <person name="Pitluck S."/>
            <person name="Chain P."/>
            <person name="Malfatti S."/>
            <person name="Shin M."/>
            <person name="Vergez L."/>
            <person name="Schmutz J."/>
            <person name="Larimer F."/>
            <person name="Land M."/>
            <person name="Hauser L."/>
            <person name="Kyrpides N."/>
            <person name="Mikhailova N."/>
            <person name="Miller C.D."/>
            <person name="Anderson A.J."/>
            <person name="Sims R.C."/>
            <person name="Richardson P."/>
        </authorList>
    </citation>
    <scope>NUCLEOTIDE SEQUENCE [LARGE SCALE GENOMIC DNA]</scope>
    <source>
        <strain>JLS</strain>
    </source>
</reference>
<evidence type="ECO:0000255" key="1">
    <source>
        <dbReference type="HAMAP-Rule" id="MF_00539"/>
    </source>
</evidence>
<evidence type="ECO:0000256" key="2">
    <source>
        <dbReference type="SAM" id="MobiDB-lite"/>
    </source>
</evidence>
<evidence type="ECO:0000305" key="3"/>
<feature type="chain" id="PRO_1000017520" description="Large ribosomal subunit protein bL27">
    <location>
        <begin position="1"/>
        <end position="88"/>
    </location>
</feature>
<feature type="region of interest" description="Disordered" evidence="2">
    <location>
        <begin position="1"/>
        <end position="21"/>
    </location>
</feature>